<reference key="1">
    <citation type="journal article" date="2005" name="BMC Biol.">
        <title>The sequence of rice chromosomes 11 and 12, rich in disease resistance genes and recent gene duplications.</title>
        <authorList>
            <consortium name="The rice chromosomes 11 and 12 sequencing consortia"/>
        </authorList>
    </citation>
    <scope>NUCLEOTIDE SEQUENCE [LARGE SCALE GENOMIC DNA]</scope>
    <source>
        <strain>cv. Nipponbare</strain>
    </source>
</reference>
<reference key="2">
    <citation type="journal article" date="2005" name="Nature">
        <title>The map-based sequence of the rice genome.</title>
        <authorList>
            <consortium name="International rice genome sequencing project (IRGSP)"/>
        </authorList>
    </citation>
    <scope>NUCLEOTIDE SEQUENCE [LARGE SCALE GENOMIC DNA]</scope>
    <source>
        <strain>cv. Nipponbare</strain>
    </source>
</reference>
<reference key="3">
    <citation type="journal article" date="2008" name="Nucleic Acids Res.">
        <title>The rice annotation project database (RAP-DB): 2008 update.</title>
        <authorList>
            <consortium name="The rice annotation project (RAP)"/>
        </authorList>
    </citation>
    <scope>GENOME REANNOTATION</scope>
    <source>
        <strain>cv. Nipponbare</strain>
    </source>
</reference>
<reference key="4">
    <citation type="journal article" date="2013" name="Rice">
        <title>Improvement of the Oryza sativa Nipponbare reference genome using next generation sequence and optical map data.</title>
        <authorList>
            <person name="Kawahara Y."/>
            <person name="de la Bastide M."/>
            <person name="Hamilton J.P."/>
            <person name="Kanamori H."/>
            <person name="McCombie W.R."/>
            <person name="Ouyang S."/>
            <person name="Schwartz D.C."/>
            <person name="Tanaka T."/>
            <person name="Wu J."/>
            <person name="Zhou S."/>
            <person name="Childs K.L."/>
            <person name="Davidson R.M."/>
            <person name="Lin H."/>
            <person name="Quesada-Ocampo L."/>
            <person name="Vaillancourt B."/>
            <person name="Sakai H."/>
            <person name="Lee S.S."/>
            <person name="Kim J."/>
            <person name="Numa H."/>
            <person name="Itoh T."/>
            <person name="Buell C.R."/>
            <person name="Matsumoto T."/>
        </authorList>
    </citation>
    <scope>GENOME REANNOTATION</scope>
    <source>
        <strain>cv. Nipponbare</strain>
    </source>
</reference>
<reference key="5">
    <citation type="journal article" date="2003" name="Science">
        <title>Collection, mapping, and annotation of over 28,000 cDNA clones from japonica rice.</title>
        <authorList>
            <consortium name="The rice full-length cDNA consortium"/>
        </authorList>
    </citation>
    <scope>NUCLEOTIDE SEQUENCE [LARGE SCALE MRNA]</scope>
    <source>
        <strain>cv. Nipponbare</strain>
    </source>
</reference>
<reference key="6">
    <citation type="journal article" date="2009" name="BMC Genomics">
        <title>Rice sHsp genes: genomic organization and expression profiling under stress and development.</title>
        <authorList>
            <person name="Sarkar N.K."/>
            <person name="Kim Y.-K."/>
            <person name="Grover A."/>
        </authorList>
    </citation>
    <scope>INDUCTION</scope>
    <scope>GENE FAMILY</scope>
</reference>
<keyword id="KW-0256">Endoplasmic reticulum</keyword>
<keyword id="KW-1185">Reference proteome</keyword>
<keyword id="KW-0732">Signal</keyword>
<keyword id="KW-0346">Stress response</keyword>
<feature type="signal peptide" evidence="1">
    <location>
        <begin position="1"/>
        <end position="29"/>
    </location>
</feature>
<feature type="chain" id="PRO_0000387477" description="21.9 kDa heat shock protein">
    <location>
        <begin position="30"/>
        <end position="206"/>
    </location>
</feature>
<feature type="domain" description="sHSP" evidence="2">
    <location>
        <begin position="65"/>
        <end position="187"/>
    </location>
</feature>
<feature type="short sequence motif" description="Cell attachment site" evidence="1">
    <location>
        <begin position="94"/>
        <end position="96"/>
    </location>
</feature>
<feature type="sequence conflict" description="In Ref. 5; AK107883." evidence="4" ref="5">
    <original>P</original>
    <variation>L</variation>
    <location>
        <position position="90"/>
    </location>
</feature>
<comment type="subunit">
    <text>May form oligomeric structures.</text>
</comment>
<comment type="subcellular location">
    <subcellularLocation>
        <location evidence="4">Endoplasmic reticulum</location>
    </subcellularLocation>
</comment>
<comment type="induction">
    <text evidence="3">By heat shock.</text>
</comment>
<comment type="similarity">
    <text evidence="2">Belongs to the small heat shock protein (HSP20) family.</text>
</comment>
<protein>
    <recommendedName>
        <fullName>21.9 kDa heat shock protein</fullName>
        <shortName>OsHsp21.9</shortName>
    </recommendedName>
</protein>
<organism>
    <name type="scientific">Oryza sativa subsp. japonica</name>
    <name type="common">Rice</name>
    <dbReference type="NCBI Taxonomy" id="39947"/>
    <lineage>
        <taxon>Eukaryota</taxon>
        <taxon>Viridiplantae</taxon>
        <taxon>Streptophyta</taxon>
        <taxon>Embryophyta</taxon>
        <taxon>Tracheophyta</taxon>
        <taxon>Spermatophyta</taxon>
        <taxon>Magnoliopsida</taxon>
        <taxon>Liliopsida</taxon>
        <taxon>Poales</taxon>
        <taxon>Poaceae</taxon>
        <taxon>BOP clade</taxon>
        <taxon>Oryzoideae</taxon>
        <taxon>Oryzeae</taxon>
        <taxon>Oryzinae</taxon>
        <taxon>Oryza</taxon>
        <taxon>Oryza sativa</taxon>
    </lineage>
</organism>
<accession>Q53M11</accession>
<accession>A0A0P0Y122</accession>
<dbReference type="EMBL" id="AC135460">
    <property type="protein sequence ID" value="AAX95989.1"/>
    <property type="molecule type" value="Genomic_DNA"/>
</dbReference>
<dbReference type="EMBL" id="AC138000">
    <property type="protein sequence ID" value="AAX95844.1"/>
    <property type="molecule type" value="Genomic_DNA"/>
</dbReference>
<dbReference type="EMBL" id="DP000010">
    <property type="protein sequence ID" value="ABA92389.1"/>
    <property type="molecule type" value="Genomic_DNA"/>
</dbReference>
<dbReference type="EMBL" id="AP008217">
    <property type="protein sequence ID" value="BAF27960.1"/>
    <property type="molecule type" value="Genomic_DNA"/>
</dbReference>
<dbReference type="EMBL" id="AP014967">
    <property type="protein sequence ID" value="BAT13400.1"/>
    <property type="molecule type" value="Genomic_DNA"/>
</dbReference>
<dbReference type="EMBL" id="AK107883">
    <property type="status" value="NOT_ANNOTATED_CDS"/>
    <property type="molecule type" value="mRNA"/>
</dbReference>
<dbReference type="RefSeq" id="XP_015616611.1">
    <property type="nucleotide sequence ID" value="XM_015761125.1"/>
</dbReference>
<dbReference type="SMR" id="Q53M11"/>
<dbReference type="FunCoup" id="Q53M11">
    <property type="interactions" value="453"/>
</dbReference>
<dbReference type="STRING" id="39947.Q53M11"/>
<dbReference type="CarbonylDB" id="Q53M11"/>
<dbReference type="PaxDb" id="39947-Q53M11"/>
<dbReference type="EnsemblPlants" id="Os11t0244200-01">
    <property type="protein sequence ID" value="Os11t0244200-01"/>
    <property type="gene ID" value="Os11g0244200"/>
</dbReference>
<dbReference type="Gramene" id="Os11t0244200-01">
    <property type="protein sequence ID" value="Os11t0244200-01"/>
    <property type="gene ID" value="Os11g0244200"/>
</dbReference>
<dbReference type="KEGG" id="dosa:Os11g0244200"/>
<dbReference type="eggNOG" id="KOG0710">
    <property type="taxonomic scope" value="Eukaryota"/>
</dbReference>
<dbReference type="HOGENOM" id="CLU_046737_5_3_1"/>
<dbReference type="InParanoid" id="Q53M11"/>
<dbReference type="OMA" id="VVMMAPP"/>
<dbReference type="OrthoDB" id="5511210at2759"/>
<dbReference type="Proteomes" id="UP000000763">
    <property type="component" value="Chromosome 11"/>
</dbReference>
<dbReference type="Proteomes" id="UP000059680">
    <property type="component" value="Chromosome 11"/>
</dbReference>
<dbReference type="GO" id="GO:0005783">
    <property type="term" value="C:endoplasmic reticulum"/>
    <property type="evidence" value="ECO:0007669"/>
    <property type="project" value="UniProtKB-SubCell"/>
</dbReference>
<dbReference type="GO" id="GO:0051082">
    <property type="term" value="F:unfolded protein binding"/>
    <property type="evidence" value="ECO:0000318"/>
    <property type="project" value="GO_Central"/>
</dbReference>
<dbReference type="GO" id="GO:0051259">
    <property type="term" value="P:protein complex oligomerization"/>
    <property type="evidence" value="ECO:0000318"/>
    <property type="project" value="GO_Central"/>
</dbReference>
<dbReference type="GO" id="GO:0006457">
    <property type="term" value="P:protein folding"/>
    <property type="evidence" value="ECO:0000318"/>
    <property type="project" value="GO_Central"/>
</dbReference>
<dbReference type="GO" id="GO:0009408">
    <property type="term" value="P:response to heat"/>
    <property type="evidence" value="ECO:0000270"/>
    <property type="project" value="UniProtKB"/>
</dbReference>
<dbReference type="GO" id="GO:0042542">
    <property type="term" value="P:response to hydrogen peroxide"/>
    <property type="evidence" value="ECO:0000318"/>
    <property type="project" value="GO_Central"/>
</dbReference>
<dbReference type="GO" id="GO:0009651">
    <property type="term" value="P:response to salt stress"/>
    <property type="evidence" value="ECO:0000318"/>
    <property type="project" value="GO_Central"/>
</dbReference>
<dbReference type="FunFam" id="2.60.40.790:FF:000068">
    <property type="entry name" value="22.0 kDa class IV heat shock protein"/>
    <property type="match status" value="1"/>
</dbReference>
<dbReference type="Gene3D" id="2.60.40.790">
    <property type="match status" value="1"/>
</dbReference>
<dbReference type="InterPro" id="IPR002068">
    <property type="entry name" value="A-crystallin/Hsp20_dom"/>
</dbReference>
<dbReference type="InterPro" id="IPR008978">
    <property type="entry name" value="HSP20-like_chaperone"/>
</dbReference>
<dbReference type="InterPro" id="IPR031107">
    <property type="entry name" value="Small_HSP"/>
</dbReference>
<dbReference type="PANTHER" id="PTHR11527">
    <property type="entry name" value="HEAT-SHOCK PROTEIN 20 FAMILY MEMBER"/>
    <property type="match status" value="1"/>
</dbReference>
<dbReference type="Pfam" id="PF00011">
    <property type="entry name" value="HSP20"/>
    <property type="match status" value="1"/>
</dbReference>
<dbReference type="SUPFAM" id="SSF49764">
    <property type="entry name" value="HSP20-like chaperones"/>
    <property type="match status" value="1"/>
</dbReference>
<dbReference type="PROSITE" id="PS01031">
    <property type="entry name" value="SHSP"/>
    <property type="match status" value="1"/>
</dbReference>
<gene>
    <name type="primary">HSP21.9</name>
    <name type="ordered locus">Os11g0244200</name>
    <name type="ordered locus">LOC_Os11g13980</name>
</gene>
<sequence length="206" mass="21870">MAAVAEREVLGMVAAVAAMVVMMAPPAAALVPYGYGYMLDDPFRVLEQSPLRPAGGVAAAAAAGEPAAVALARCDWKETPEAHVVTVDVPGVRRGDVRVEVDEASRVLRVSGERRRAGAAEEEEGERDGVRWHRAERAAGRFWRRFRMPPGADVGRVAARLDDGVLTVTVPKVPGHRGREPRVVAIDGAGAGDMEAEVVKASKAEM</sequence>
<proteinExistence type="evidence at transcript level"/>
<name>HS219_ORYSJ</name>
<evidence type="ECO:0000255" key="1"/>
<evidence type="ECO:0000255" key="2">
    <source>
        <dbReference type="PROSITE-ProRule" id="PRU00285"/>
    </source>
</evidence>
<evidence type="ECO:0000269" key="3">
    <source>
    </source>
</evidence>
<evidence type="ECO:0000305" key="4"/>